<organism>
    <name type="scientific">Mycoplasma sp</name>
    <dbReference type="NCBI Taxonomy" id="2108"/>
    <lineage>
        <taxon>Bacteria</taxon>
        <taxon>Bacillati</taxon>
        <taxon>Mycoplasmatota</taxon>
        <taxon>Mollicutes</taxon>
        <taxon>Mycoplasmataceae</taxon>
        <taxon>Mycoplasma</taxon>
    </lineage>
</organism>
<dbReference type="EC" id="2.7.7.6" evidence="1"/>
<dbReference type="EMBL" id="L09636">
    <property type="protein sequence ID" value="AAA61685.2"/>
    <property type="molecule type" value="Genomic_DNA"/>
</dbReference>
<dbReference type="EMBL" id="L09636">
    <property type="protein sequence ID" value="AAA61684.1"/>
    <property type="molecule type" value="Genomic_DNA"/>
</dbReference>
<dbReference type="SMR" id="P38018"/>
<dbReference type="GO" id="GO:0005737">
    <property type="term" value="C:cytoplasm"/>
    <property type="evidence" value="ECO:0007669"/>
    <property type="project" value="UniProtKB-ARBA"/>
</dbReference>
<dbReference type="GO" id="GO:0000428">
    <property type="term" value="C:DNA-directed RNA polymerase complex"/>
    <property type="evidence" value="ECO:0007669"/>
    <property type="project" value="UniProtKB-KW"/>
</dbReference>
<dbReference type="GO" id="GO:0003677">
    <property type="term" value="F:DNA binding"/>
    <property type="evidence" value="ECO:0007669"/>
    <property type="project" value="UniProtKB-UniRule"/>
</dbReference>
<dbReference type="GO" id="GO:0003899">
    <property type="term" value="F:DNA-directed RNA polymerase activity"/>
    <property type="evidence" value="ECO:0007669"/>
    <property type="project" value="UniProtKB-UniRule"/>
</dbReference>
<dbReference type="GO" id="GO:0046983">
    <property type="term" value="F:protein dimerization activity"/>
    <property type="evidence" value="ECO:0007669"/>
    <property type="project" value="InterPro"/>
</dbReference>
<dbReference type="GO" id="GO:0006351">
    <property type="term" value="P:DNA-templated transcription"/>
    <property type="evidence" value="ECO:0007669"/>
    <property type="project" value="UniProtKB-UniRule"/>
</dbReference>
<dbReference type="CDD" id="cd06928">
    <property type="entry name" value="RNAP_alpha_NTD"/>
    <property type="match status" value="1"/>
</dbReference>
<dbReference type="Gene3D" id="1.10.150.20">
    <property type="entry name" value="5' to 3' exonuclease, C-terminal subdomain"/>
    <property type="match status" value="1"/>
</dbReference>
<dbReference type="Gene3D" id="2.170.120.12">
    <property type="entry name" value="DNA-directed RNA polymerase, insert domain"/>
    <property type="match status" value="1"/>
</dbReference>
<dbReference type="Gene3D" id="3.30.1360.10">
    <property type="entry name" value="RNA polymerase, RBP11-like subunit"/>
    <property type="match status" value="1"/>
</dbReference>
<dbReference type="HAMAP" id="MF_00059">
    <property type="entry name" value="RNApol_bact_RpoA"/>
    <property type="match status" value="1"/>
</dbReference>
<dbReference type="InterPro" id="IPR011262">
    <property type="entry name" value="DNA-dir_RNA_pol_insert"/>
</dbReference>
<dbReference type="InterPro" id="IPR011263">
    <property type="entry name" value="DNA-dir_RNA_pol_RpoA/D/Rpb3"/>
</dbReference>
<dbReference type="InterPro" id="IPR011773">
    <property type="entry name" value="DNA-dir_RpoA"/>
</dbReference>
<dbReference type="InterPro" id="IPR036603">
    <property type="entry name" value="RBP11-like"/>
</dbReference>
<dbReference type="InterPro" id="IPR011260">
    <property type="entry name" value="RNAP_asu_C"/>
</dbReference>
<dbReference type="InterPro" id="IPR036643">
    <property type="entry name" value="RNApol_insert_sf"/>
</dbReference>
<dbReference type="NCBIfam" id="NF003519">
    <property type="entry name" value="PRK05182.2-5"/>
    <property type="match status" value="1"/>
</dbReference>
<dbReference type="NCBIfam" id="TIGR02027">
    <property type="entry name" value="rpoA"/>
    <property type="match status" value="1"/>
</dbReference>
<dbReference type="Pfam" id="PF01000">
    <property type="entry name" value="RNA_pol_A_bac"/>
    <property type="match status" value="1"/>
</dbReference>
<dbReference type="Pfam" id="PF03118">
    <property type="entry name" value="RNA_pol_A_CTD"/>
    <property type="match status" value="1"/>
</dbReference>
<dbReference type="Pfam" id="PF01193">
    <property type="entry name" value="RNA_pol_L"/>
    <property type="match status" value="1"/>
</dbReference>
<dbReference type="SMART" id="SM00662">
    <property type="entry name" value="RPOLD"/>
    <property type="match status" value="1"/>
</dbReference>
<dbReference type="SUPFAM" id="SSF47789">
    <property type="entry name" value="C-terminal domain of RNA polymerase alpha subunit"/>
    <property type="match status" value="1"/>
</dbReference>
<dbReference type="SUPFAM" id="SSF56553">
    <property type="entry name" value="Insert subdomain of RNA polymerase alpha subunit"/>
    <property type="match status" value="1"/>
</dbReference>
<dbReference type="SUPFAM" id="SSF55257">
    <property type="entry name" value="RBP11-like subunits of RNA polymerase"/>
    <property type="match status" value="1"/>
</dbReference>
<comment type="function">
    <text>DNA-dependent RNA polymerase catalyzes the transcription of DNA into RNA using the four ribonucleoside triphosphates as substrates.</text>
</comment>
<comment type="catalytic activity">
    <reaction evidence="1">
        <text>RNA(n) + a ribonucleoside 5'-triphosphate = RNA(n+1) + diphosphate</text>
        <dbReference type="Rhea" id="RHEA:21248"/>
        <dbReference type="Rhea" id="RHEA-COMP:14527"/>
        <dbReference type="Rhea" id="RHEA-COMP:17342"/>
        <dbReference type="ChEBI" id="CHEBI:33019"/>
        <dbReference type="ChEBI" id="CHEBI:61557"/>
        <dbReference type="ChEBI" id="CHEBI:140395"/>
        <dbReference type="EC" id="2.7.7.6"/>
    </reaction>
</comment>
<comment type="subunit">
    <text evidence="1">Homodimer. The RNAP catalytic core consists of 2 alpha, 1 beta, 1 beta' and 1 omega subunit. When a sigma factor is associated with the core the holoenzyme is formed, which can initiate transcription.</text>
</comment>
<comment type="domain">
    <text evidence="1">The N-terminal domain is essential for RNAP assembly and basal transcription, whereas the C-terminal domain is involved in interaction with transcriptional regulators and with upstream promoter elements.</text>
</comment>
<comment type="similarity">
    <text evidence="1">Belongs to the RNA polymerase alpha chain family.</text>
</comment>
<comment type="caution">
    <text evidence="2">Was originally thought to originate from Chlamydia trachomatis.</text>
</comment>
<protein>
    <recommendedName>
        <fullName evidence="1">DNA-directed RNA polymerase subunit alpha</fullName>
        <shortName evidence="1">RNAP subunit alpha</shortName>
        <ecNumber evidence="1">2.7.7.6</ecNumber>
    </recommendedName>
    <alternativeName>
        <fullName evidence="1">RNA polymerase subunit alpha</fullName>
    </alternativeName>
    <alternativeName>
        <fullName evidence="1">Transcriptase subunit alpha</fullName>
    </alternativeName>
</protein>
<gene>
    <name evidence="1" type="primary">rpoA</name>
</gene>
<reference key="1">
    <citation type="journal article" date="1993" name="J. Bacteriol.">
        <title>Cloning and characterization of the RNA polymerase alpha-subunit operon of Chlamydia trachomatis.</title>
        <authorList>
            <person name="Tan M."/>
            <person name="Klein R."/>
            <person name="Grant R."/>
            <person name="Ganem D."/>
            <person name="Engel J.N."/>
        </authorList>
    </citation>
    <scope>NUCLEOTIDE SEQUENCE [GENOMIC DNA]</scope>
</reference>
<reference key="2">
    <citation type="journal article" date="1995" name="J. Bacteriol.">
        <authorList>
            <person name="Tan M."/>
            <person name="Klein R."/>
            <person name="Grant R."/>
            <person name="Ganem D."/>
            <person name="Engel J.N."/>
        </authorList>
    </citation>
    <scope>ERRATUM OF PUBMED:8226662</scope>
    <scope>CORRECTION OF SPECIES OF ORIGIN</scope>
</reference>
<evidence type="ECO:0000255" key="1">
    <source>
        <dbReference type="HAMAP-Rule" id="MF_00059"/>
    </source>
</evidence>
<evidence type="ECO:0000305" key="2">
    <source>
    </source>
</evidence>
<sequence>MEKIQKITYKELVAEKVNDFNTTFVIEPLARGYANTMGTVLRRTLLSSITSVAPFAIKINNVEHEFQTISGLKEDAITLVRNIRNIRFVYNEEIFEKENLAKISFKTNKEGEIFASDIPEVSGLEIVNKDQYIANIAKGGSLEFDLFLRKGRGFIDFEENKNVISQYGSRLESSIKNGQFLAMDSDFSPVKKCAISFEELNSSSKLIEERLKIKIETDCTVSAKEAIEQAAKIIVAHFQIIGNINALETIELFEENKEKKEREIKSTTPITKLGLSVRSENALRRAKYNTVEEVLGLSDEELSNIKNLGKKSIQDIIEKRNEWKERIGYDDGQSDNFIIESLDQLNNSEEGEE</sequence>
<feature type="chain" id="PRO_0000175344" description="DNA-directed RNA polymerase subunit alpha">
    <location>
        <begin position="1"/>
        <end position="353"/>
    </location>
</feature>
<feature type="region of interest" description="Alpha N-terminal domain (alpha-NTD)" evidence="1">
    <location>
        <begin position="1"/>
        <end position="245"/>
    </location>
</feature>
<feature type="region of interest" description="Alpha C-terminal domain (alpha-CTD)" evidence="1">
    <location>
        <begin position="261"/>
        <end position="353"/>
    </location>
</feature>
<name>RPOA_MYCSP</name>
<keyword id="KW-0240">DNA-directed RNA polymerase</keyword>
<keyword id="KW-0548">Nucleotidyltransferase</keyword>
<keyword id="KW-0804">Transcription</keyword>
<keyword id="KW-0808">Transferase</keyword>
<accession>P38018</accession>
<accession>Q46452</accession>
<accession>Q8VVM1</accession>
<proteinExistence type="inferred from homology"/>